<comment type="function">
    <text evidence="3 4 5 6 10">Component of the small ribosomal subunit (PubMed:23873042, PubMed:25601755, PubMed:26245381, PubMed:27863242, PubMed:30517857). The ribosome is a large ribonucleoprotein complex responsible for the synthesis of proteins in the cell (PubMed:23873042, PubMed:25601755, PubMed:26245381, PubMed:27863242, PubMed:30517857). Part of the small subunit (SSU) processome, first precursor of the small eukaryotic ribosomal subunit (PubMed:23873042, PubMed:25601755, PubMed:26245381, PubMed:27863242, PubMed:30517857). During the assembly of the SSU processome in the nucleolus, many ribosome biogenesis factors, an RNA chaperone and ribosomal proteins associate with the nascent pre-rRNA and work in concert to generate RNA folding, modifications, rearrangements and cleavage as well as targeted degradation of pre-ribosomal RNA by the RNA exosome (PubMed:23873042, PubMed:25601755, PubMed:26245381, PubMed:27863242, PubMed:30517857).</text>
</comment>
<comment type="subunit">
    <text evidence="3 4 5 6 7 8 9 10 11 12 13 14 15 16 17 18 19">Component of the small ribosomal subunit (PubMed:23873042, PubMed:25601755, PubMed:26245381, PubMed:27863242, PubMed:29856316, PubMed:30293783, PubMed:30355441, PubMed:30517857, PubMed:31246176, PubMed:31609474, PubMed:31768042, PubMed:32286223, PubMed:33296660, PubMed:35679869, PubMed:35709277, PubMed:35822879, PubMed:36653451). Part of the small subunit (SSU) processome, composed of more than 70 proteins and the RNA chaperone small nucleolar RNA (snoRNA) U3 (PubMed:23873042, PubMed:25601755, PubMed:26245381, PubMed:27863242, PubMed:29856316, PubMed:30293783, PubMed:30355441, PubMed:30517857, PubMed:31246176, PubMed:31609474, PubMed:31768042, PubMed:32286223, PubMed:33296660, PubMed:35679869, PubMed:35709277, PubMed:35822879, PubMed:36653451).</text>
</comment>
<comment type="subcellular location">
    <subcellularLocation>
        <location evidence="3 4 5 6 7 8 9 10 11 12 13 14 15 16 17 18 19">Cytoplasm</location>
    </subcellularLocation>
    <subcellularLocation>
        <location evidence="1">Nucleus</location>
        <location evidence="1">Nucleolus</location>
    </subcellularLocation>
</comment>
<comment type="PTM">
    <text evidence="1">Ubiquitinated at Lys-103 by RNF14 and RNF25 in response to ribosome collisions (ribosome stalling).</text>
</comment>
<comment type="similarity">
    <text evidence="20">Belongs to the eukaryotic ribosomal protein eS17 family.</text>
</comment>
<gene>
    <name type="primary">RPS17</name>
</gene>
<evidence type="ECO:0000250" key="1">
    <source>
        <dbReference type="UniProtKB" id="P08708"/>
    </source>
</evidence>
<evidence type="ECO:0000250" key="2">
    <source>
        <dbReference type="UniProtKB" id="P63276"/>
    </source>
</evidence>
<evidence type="ECO:0000269" key="3">
    <source>
    </source>
</evidence>
<evidence type="ECO:0000269" key="4">
    <source>
    </source>
</evidence>
<evidence type="ECO:0000269" key="5">
    <source>
    </source>
</evidence>
<evidence type="ECO:0000269" key="6">
    <source>
    </source>
</evidence>
<evidence type="ECO:0000269" key="7">
    <source>
    </source>
</evidence>
<evidence type="ECO:0000269" key="8">
    <source>
    </source>
</evidence>
<evidence type="ECO:0000269" key="9">
    <source>
    </source>
</evidence>
<evidence type="ECO:0000269" key="10">
    <source>
    </source>
</evidence>
<evidence type="ECO:0000269" key="11">
    <source>
    </source>
</evidence>
<evidence type="ECO:0000269" key="12">
    <source>
    </source>
</evidence>
<evidence type="ECO:0000269" key="13">
    <source>
    </source>
</evidence>
<evidence type="ECO:0000269" key="14">
    <source>
    </source>
</evidence>
<evidence type="ECO:0000269" key="15">
    <source>
    </source>
</evidence>
<evidence type="ECO:0000269" key="16">
    <source>
    </source>
</evidence>
<evidence type="ECO:0000269" key="17">
    <source>
    </source>
</evidence>
<evidence type="ECO:0000269" key="18">
    <source>
    </source>
</evidence>
<evidence type="ECO:0000269" key="19">
    <source>
    </source>
</evidence>
<evidence type="ECO:0000305" key="20"/>
<evidence type="ECO:0007744" key="21">
    <source>
        <dbReference type="PDB" id="3JAG"/>
    </source>
</evidence>
<evidence type="ECO:0007744" key="22">
    <source>
        <dbReference type="PDB" id="3JAH"/>
    </source>
</evidence>
<evidence type="ECO:0007744" key="23">
    <source>
        <dbReference type="PDB" id="4D61"/>
    </source>
</evidence>
<evidence type="ECO:0007744" key="24">
    <source>
        <dbReference type="PDB" id="4KZX"/>
    </source>
</evidence>
<evidence type="ECO:0007744" key="25">
    <source>
        <dbReference type="PDB" id="4KZY"/>
    </source>
</evidence>
<evidence type="ECO:0007744" key="26">
    <source>
        <dbReference type="PDB" id="5LZU"/>
    </source>
</evidence>
<evidence type="ECO:0007744" key="27">
    <source>
        <dbReference type="PDB" id="6D90"/>
    </source>
</evidence>
<evidence type="ECO:0007744" key="28">
    <source>
        <dbReference type="PDB" id="6GZ3"/>
    </source>
</evidence>
<evidence type="ECO:0007744" key="29">
    <source>
        <dbReference type="PDB" id="6HCF"/>
    </source>
</evidence>
<evidence type="ECO:0007744" key="30">
    <source>
        <dbReference type="PDB" id="6HCJ"/>
    </source>
</evidence>
<evidence type="ECO:0007744" key="31">
    <source>
        <dbReference type="PDB" id="6MTB"/>
    </source>
</evidence>
<evidence type="ECO:0007744" key="32">
    <source>
        <dbReference type="PDB" id="6MTC"/>
    </source>
</evidence>
<evidence type="ECO:0007744" key="33">
    <source>
        <dbReference type="PDB" id="6P4G"/>
    </source>
</evidence>
<evidence type="ECO:0007744" key="34">
    <source>
        <dbReference type="PDB" id="6P4H"/>
    </source>
</evidence>
<evidence type="ECO:0007744" key="35">
    <source>
        <dbReference type="PDB" id="6R5Q"/>
    </source>
</evidence>
<evidence type="ECO:0007744" key="36">
    <source>
        <dbReference type="PDB" id="6R6G"/>
    </source>
</evidence>
<evidence type="ECO:0007744" key="37">
    <source>
        <dbReference type="PDB" id="6SGC"/>
    </source>
</evidence>
<evidence type="ECO:0007744" key="38">
    <source>
        <dbReference type="PDB" id="6W2S"/>
    </source>
</evidence>
<evidence type="ECO:0007744" key="39">
    <source>
        <dbReference type="PDB" id="6W2T"/>
    </source>
</evidence>
<evidence type="ECO:0007744" key="40">
    <source>
        <dbReference type="PDB" id="6ZVK"/>
    </source>
</evidence>
<evidence type="ECO:0007744" key="41">
    <source>
        <dbReference type="PDB" id="7A01"/>
    </source>
</evidence>
<evidence type="ECO:0007744" key="42">
    <source>
        <dbReference type="PDB" id="7OYD"/>
    </source>
</evidence>
<evidence type="ECO:0007744" key="43">
    <source>
        <dbReference type="PDB" id="7SYI"/>
    </source>
</evidence>
<evidence type="ECO:0007744" key="44">
    <source>
        <dbReference type="PDB" id="7SYJ"/>
    </source>
</evidence>
<evidence type="ECO:0007744" key="45">
    <source>
        <dbReference type="PDB" id="7UCJ"/>
    </source>
</evidence>
<evidence type="ECO:0007744" key="46">
    <source>
        <dbReference type="PDB" id="7UCK"/>
    </source>
</evidence>
<evidence type="ECO:0007744" key="47">
    <source>
        <dbReference type="PDB" id="7ZJW"/>
    </source>
</evidence>
<evidence type="ECO:0007744" key="48">
    <source>
        <dbReference type="PDB" id="7ZJX"/>
    </source>
</evidence>
<evidence type="ECO:0007829" key="49">
    <source>
        <dbReference type="PDB" id="6YAL"/>
    </source>
</evidence>
<evidence type="ECO:0007829" key="50">
    <source>
        <dbReference type="PDB" id="7JQB"/>
    </source>
</evidence>
<evidence type="ECO:0007829" key="51">
    <source>
        <dbReference type="PDB" id="8P03"/>
    </source>
</evidence>
<evidence type="ECO:0007829" key="52">
    <source>
        <dbReference type="PDB" id="8P09"/>
    </source>
</evidence>
<dbReference type="EMBL" id="AAGW02061996">
    <property type="status" value="NOT_ANNOTATED_CDS"/>
    <property type="molecule type" value="Genomic_DNA"/>
</dbReference>
<dbReference type="RefSeq" id="XP_002713874.1">
    <property type="nucleotide sequence ID" value="XM_002713828.3"/>
</dbReference>
<dbReference type="RefSeq" id="XP_002721523.1">
    <property type="nucleotide sequence ID" value="XM_002721477.4"/>
</dbReference>
<dbReference type="PDB" id="3JAG">
    <property type="method" value="EM"/>
    <property type="resolution" value="3.65 A"/>
    <property type="chains" value="RR=1-129"/>
</dbReference>
<dbReference type="PDB" id="3JAH">
    <property type="method" value="EM"/>
    <property type="resolution" value="3.45 A"/>
    <property type="chains" value="RR=1-129"/>
</dbReference>
<dbReference type="PDB" id="3JAI">
    <property type="method" value="EM"/>
    <property type="resolution" value="3.65 A"/>
    <property type="chains" value="RR=1-129"/>
</dbReference>
<dbReference type="PDB" id="4D5L">
    <property type="method" value="EM"/>
    <property type="resolution" value="9.00 A"/>
    <property type="chains" value="R=1-135"/>
</dbReference>
<dbReference type="PDB" id="4D61">
    <property type="method" value="EM"/>
    <property type="resolution" value="9.00 A"/>
    <property type="chains" value="R=1-135"/>
</dbReference>
<dbReference type="PDB" id="4KZX">
    <property type="method" value="X-ray"/>
    <property type="resolution" value="7.81 A"/>
    <property type="chains" value="R=1-135"/>
</dbReference>
<dbReference type="PDB" id="4KZY">
    <property type="method" value="X-ray"/>
    <property type="resolution" value="7.01 A"/>
    <property type="chains" value="R=1-135"/>
</dbReference>
<dbReference type="PDB" id="4KZZ">
    <property type="method" value="X-ray"/>
    <property type="resolution" value="7.03 A"/>
    <property type="chains" value="R=1-135"/>
</dbReference>
<dbReference type="PDB" id="5K0Y">
    <property type="method" value="EM"/>
    <property type="resolution" value="5.80 A"/>
    <property type="chains" value="e=1-126"/>
</dbReference>
<dbReference type="PDB" id="5LZS">
    <property type="method" value="EM"/>
    <property type="resolution" value="3.31 A"/>
    <property type="chains" value="RR=1-135"/>
</dbReference>
<dbReference type="PDB" id="5LZT">
    <property type="method" value="EM"/>
    <property type="resolution" value="3.65 A"/>
    <property type="chains" value="RR=1-135"/>
</dbReference>
<dbReference type="PDB" id="5LZU">
    <property type="method" value="EM"/>
    <property type="resolution" value="3.75 A"/>
    <property type="chains" value="RR=1-135"/>
</dbReference>
<dbReference type="PDB" id="5LZV">
    <property type="method" value="EM"/>
    <property type="resolution" value="3.35 A"/>
    <property type="chains" value="RR=1-135"/>
</dbReference>
<dbReference type="PDB" id="5LZW">
    <property type="method" value="EM"/>
    <property type="resolution" value="3.53 A"/>
    <property type="chains" value="RR=1-135"/>
</dbReference>
<dbReference type="PDB" id="5LZX">
    <property type="method" value="EM"/>
    <property type="resolution" value="3.67 A"/>
    <property type="chains" value="RR=1-135"/>
</dbReference>
<dbReference type="PDB" id="5LZY">
    <property type="method" value="EM"/>
    <property type="resolution" value="3.99 A"/>
    <property type="chains" value="RR=1-135"/>
</dbReference>
<dbReference type="PDB" id="5LZZ">
    <property type="method" value="EM"/>
    <property type="resolution" value="3.47 A"/>
    <property type="chains" value="RR=1-135"/>
</dbReference>
<dbReference type="PDB" id="6D90">
    <property type="method" value="EM"/>
    <property type="resolution" value="3.20 A"/>
    <property type="chains" value="SS=1-135"/>
</dbReference>
<dbReference type="PDB" id="6D9J">
    <property type="method" value="EM"/>
    <property type="resolution" value="3.20 A"/>
    <property type="chains" value="SS=1-135"/>
</dbReference>
<dbReference type="PDB" id="6GZ3">
    <property type="method" value="EM"/>
    <property type="resolution" value="3.60 A"/>
    <property type="chains" value="BR=2-126"/>
</dbReference>
<dbReference type="PDB" id="6HCF">
    <property type="method" value="EM"/>
    <property type="resolution" value="3.90 A"/>
    <property type="chains" value="S1=1-135"/>
</dbReference>
<dbReference type="PDB" id="6HCJ">
    <property type="method" value="EM"/>
    <property type="resolution" value="3.80 A"/>
    <property type="chains" value="S2=1-135"/>
</dbReference>
<dbReference type="PDB" id="6HCM">
    <property type="method" value="EM"/>
    <property type="resolution" value="6.80 A"/>
    <property type="chains" value="S1=1-135"/>
</dbReference>
<dbReference type="PDB" id="6HCQ">
    <property type="method" value="EM"/>
    <property type="resolution" value="6.50 A"/>
    <property type="chains" value="S2=1-135"/>
</dbReference>
<dbReference type="PDB" id="6MTB">
    <property type="method" value="EM"/>
    <property type="resolution" value="3.60 A"/>
    <property type="chains" value="RR=2-133"/>
</dbReference>
<dbReference type="PDB" id="6MTC">
    <property type="method" value="EM"/>
    <property type="resolution" value="3.40 A"/>
    <property type="chains" value="RR=2-133"/>
</dbReference>
<dbReference type="PDB" id="6MTD">
    <property type="method" value="EM"/>
    <property type="resolution" value="3.30 A"/>
    <property type="chains" value="RR=2-133"/>
</dbReference>
<dbReference type="PDB" id="6MTE">
    <property type="method" value="EM"/>
    <property type="resolution" value="3.40 A"/>
    <property type="chains" value="RR=2-133"/>
</dbReference>
<dbReference type="PDB" id="6P4G">
    <property type="method" value="EM"/>
    <property type="resolution" value="3.10 A"/>
    <property type="chains" value="S=1-135"/>
</dbReference>
<dbReference type="PDB" id="6P4H">
    <property type="method" value="EM"/>
    <property type="resolution" value="3.20 A"/>
    <property type="chains" value="S=1-135"/>
</dbReference>
<dbReference type="PDB" id="6P5I">
    <property type="method" value="EM"/>
    <property type="resolution" value="3.10 A"/>
    <property type="chains" value="S=1-135"/>
</dbReference>
<dbReference type="PDB" id="6P5J">
    <property type="method" value="EM"/>
    <property type="resolution" value="3.10 A"/>
    <property type="chains" value="S=1-135"/>
</dbReference>
<dbReference type="PDB" id="6P5K">
    <property type="method" value="EM"/>
    <property type="resolution" value="3.10 A"/>
    <property type="chains" value="S=1-135"/>
</dbReference>
<dbReference type="PDB" id="6P5N">
    <property type="method" value="EM"/>
    <property type="resolution" value="3.20 A"/>
    <property type="chains" value="S=1-135"/>
</dbReference>
<dbReference type="PDB" id="6R5Q">
    <property type="method" value="EM"/>
    <property type="resolution" value="3.00 A"/>
    <property type="chains" value="KK=2-133"/>
</dbReference>
<dbReference type="PDB" id="6R6G">
    <property type="method" value="EM"/>
    <property type="resolution" value="3.70 A"/>
    <property type="chains" value="KK=2-133"/>
</dbReference>
<dbReference type="PDB" id="6R6P">
    <property type="method" value="EM"/>
    <property type="resolution" value="3.10 A"/>
    <property type="chains" value="YY=2-133"/>
</dbReference>
<dbReference type="PDB" id="6R7Q">
    <property type="method" value="EM"/>
    <property type="resolution" value="3.90 A"/>
    <property type="chains" value="KK=2-133"/>
</dbReference>
<dbReference type="PDB" id="6SGC">
    <property type="method" value="EM"/>
    <property type="resolution" value="2.80 A"/>
    <property type="chains" value="S1=1-135"/>
</dbReference>
<dbReference type="PDB" id="6W2S">
    <property type="method" value="EM"/>
    <property type="resolution" value="3.00 A"/>
    <property type="chains" value="S=1-135"/>
</dbReference>
<dbReference type="PDB" id="6W2T">
    <property type="method" value="EM"/>
    <property type="resolution" value="3.36 A"/>
    <property type="chains" value="S=1-135"/>
</dbReference>
<dbReference type="PDB" id="6YAL">
    <property type="method" value="EM"/>
    <property type="resolution" value="3.00 A"/>
    <property type="chains" value="T=1-135"/>
</dbReference>
<dbReference type="PDB" id="6YAM">
    <property type="method" value="EM"/>
    <property type="resolution" value="3.60 A"/>
    <property type="chains" value="T=1-135"/>
</dbReference>
<dbReference type="PDB" id="6YAN">
    <property type="method" value="EM"/>
    <property type="resolution" value="3.48 A"/>
    <property type="chains" value="T=1-126"/>
</dbReference>
<dbReference type="PDB" id="6ZVK">
    <property type="method" value="EM"/>
    <property type="resolution" value="3.49 A"/>
    <property type="chains" value="C3=1-129"/>
</dbReference>
<dbReference type="PDB" id="7A01">
    <property type="method" value="EM"/>
    <property type="resolution" value="3.60 A"/>
    <property type="chains" value="C3=1-129"/>
</dbReference>
<dbReference type="PDB" id="7JQB">
    <property type="method" value="EM"/>
    <property type="resolution" value="2.70 A"/>
    <property type="chains" value="S=1-135"/>
</dbReference>
<dbReference type="PDB" id="7JQC">
    <property type="method" value="EM"/>
    <property type="resolution" value="3.30 A"/>
    <property type="chains" value="S=1-135"/>
</dbReference>
<dbReference type="PDB" id="7MDZ">
    <property type="method" value="EM"/>
    <property type="resolution" value="3.20 A"/>
    <property type="chains" value="RR=1-135"/>
</dbReference>
<dbReference type="PDB" id="7NWI">
    <property type="method" value="EM"/>
    <property type="resolution" value="3.13 A"/>
    <property type="chains" value="RR=1-129"/>
</dbReference>
<dbReference type="PDB" id="7O7Y">
    <property type="method" value="EM"/>
    <property type="resolution" value="2.20 A"/>
    <property type="chains" value="Aq=1-135"/>
</dbReference>
<dbReference type="PDB" id="7O7Z">
    <property type="method" value="EM"/>
    <property type="resolution" value="2.40 A"/>
    <property type="chains" value="Aq=1-135"/>
</dbReference>
<dbReference type="PDB" id="7O80">
    <property type="method" value="EM"/>
    <property type="resolution" value="2.90 A"/>
    <property type="chains" value="Aq=1-135"/>
</dbReference>
<dbReference type="PDB" id="7O81">
    <property type="method" value="EM"/>
    <property type="resolution" value="3.10 A"/>
    <property type="chains" value="Aq=1-135"/>
</dbReference>
<dbReference type="PDB" id="7OYD">
    <property type="method" value="EM"/>
    <property type="resolution" value="2.30 A"/>
    <property type="chains" value="RR=1-135"/>
</dbReference>
<dbReference type="PDB" id="7SYG">
    <property type="method" value="EM"/>
    <property type="resolution" value="4.30 A"/>
    <property type="chains" value="S=1-135"/>
</dbReference>
<dbReference type="PDB" id="7SYH">
    <property type="method" value="EM"/>
    <property type="resolution" value="4.60 A"/>
    <property type="chains" value="S=1-135"/>
</dbReference>
<dbReference type="PDB" id="7SYI">
    <property type="method" value="EM"/>
    <property type="resolution" value="4.50 A"/>
    <property type="chains" value="S=1-135"/>
</dbReference>
<dbReference type="PDB" id="7SYJ">
    <property type="method" value="EM"/>
    <property type="resolution" value="4.80 A"/>
    <property type="chains" value="S=1-135"/>
</dbReference>
<dbReference type="PDB" id="7SYK">
    <property type="method" value="EM"/>
    <property type="resolution" value="4.20 A"/>
    <property type="chains" value="S=1-135"/>
</dbReference>
<dbReference type="PDB" id="7SYL">
    <property type="method" value="EM"/>
    <property type="resolution" value="4.50 A"/>
    <property type="chains" value="S=1-135"/>
</dbReference>
<dbReference type="PDB" id="7SYM">
    <property type="method" value="EM"/>
    <property type="resolution" value="4.80 A"/>
    <property type="chains" value="S=1-135"/>
</dbReference>
<dbReference type="PDB" id="7SYN">
    <property type="method" value="EM"/>
    <property type="resolution" value="4.00 A"/>
    <property type="chains" value="S=1-135"/>
</dbReference>
<dbReference type="PDB" id="7SYO">
    <property type="method" value="EM"/>
    <property type="resolution" value="4.60 A"/>
    <property type="chains" value="S=1-135"/>
</dbReference>
<dbReference type="PDB" id="7SYP">
    <property type="method" value="EM"/>
    <property type="resolution" value="4.00 A"/>
    <property type="chains" value="S=1-135"/>
</dbReference>
<dbReference type="PDB" id="7SYQ">
    <property type="method" value="EM"/>
    <property type="resolution" value="3.80 A"/>
    <property type="chains" value="S=1-135"/>
</dbReference>
<dbReference type="PDB" id="7SYR">
    <property type="method" value="EM"/>
    <property type="resolution" value="3.60 A"/>
    <property type="chains" value="S=1-135"/>
</dbReference>
<dbReference type="PDB" id="7SYS">
    <property type="method" value="EM"/>
    <property type="resolution" value="3.50 A"/>
    <property type="chains" value="S=1-135"/>
</dbReference>
<dbReference type="PDB" id="7SYT">
    <property type="method" value="EM"/>
    <property type="resolution" value="4.40 A"/>
    <property type="chains" value="S=1-135"/>
</dbReference>
<dbReference type="PDB" id="7SYU">
    <property type="method" value="EM"/>
    <property type="resolution" value="4.60 A"/>
    <property type="chains" value="S=1-135"/>
</dbReference>
<dbReference type="PDB" id="7SYV">
    <property type="method" value="EM"/>
    <property type="resolution" value="3.90 A"/>
    <property type="chains" value="S=1-135"/>
</dbReference>
<dbReference type="PDB" id="7SYW">
    <property type="method" value="EM"/>
    <property type="resolution" value="3.70 A"/>
    <property type="chains" value="S=1-135"/>
</dbReference>
<dbReference type="PDB" id="7SYX">
    <property type="method" value="EM"/>
    <property type="resolution" value="3.70 A"/>
    <property type="chains" value="S=1-135"/>
</dbReference>
<dbReference type="PDB" id="7TOQ">
    <property type="method" value="EM"/>
    <property type="resolution" value="3.10 A"/>
    <property type="chains" value="AS17=2-133"/>
</dbReference>
<dbReference type="PDB" id="7TOR">
    <property type="method" value="EM"/>
    <property type="resolution" value="2.90 A"/>
    <property type="chains" value="AS17=2-133"/>
</dbReference>
<dbReference type="PDB" id="7UCJ">
    <property type="method" value="EM"/>
    <property type="resolution" value="3.10 A"/>
    <property type="chains" value="RR=2-133"/>
</dbReference>
<dbReference type="PDB" id="7UCK">
    <property type="method" value="EM"/>
    <property type="resolution" value="2.80 A"/>
    <property type="chains" value="RR=2-133"/>
</dbReference>
<dbReference type="PDB" id="7ZJW">
    <property type="method" value="EM"/>
    <property type="resolution" value="2.80 A"/>
    <property type="chains" value="Sc=1-135"/>
</dbReference>
<dbReference type="PDB" id="7ZJX">
    <property type="method" value="EM"/>
    <property type="resolution" value="3.10 A"/>
    <property type="chains" value="Sc=1-135"/>
</dbReference>
<dbReference type="PDB" id="8BHF">
    <property type="method" value="EM"/>
    <property type="resolution" value="3.10 A"/>
    <property type="chains" value="S3=2-133"/>
</dbReference>
<dbReference type="PDB" id="8BTK">
    <property type="method" value="EM"/>
    <property type="resolution" value="3.50 A"/>
    <property type="chains" value="Aq=1-135"/>
</dbReference>
<dbReference type="PDB" id="8P03">
    <property type="method" value="EM"/>
    <property type="resolution" value="3.04 A"/>
    <property type="chains" value="T=1-135"/>
</dbReference>
<dbReference type="PDB" id="8P09">
    <property type="method" value="EM"/>
    <property type="resolution" value="3.30 A"/>
    <property type="chains" value="T=1-135"/>
</dbReference>
<dbReference type="PDB" id="8P2K">
    <property type="method" value="EM"/>
    <property type="resolution" value="2.90 A"/>
    <property type="chains" value="Aq=1-135"/>
</dbReference>
<dbReference type="PDB" id="8SCB">
    <property type="method" value="EM"/>
    <property type="resolution" value="2.50 A"/>
    <property type="chains" value="RR=1-135"/>
</dbReference>
<dbReference type="PDB" id="8VFT">
    <property type="method" value="EM"/>
    <property type="resolution" value="3.30 A"/>
    <property type="chains" value="RR=1-135"/>
</dbReference>
<dbReference type="PDB" id="9BDL">
    <property type="method" value="EM"/>
    <property type="resolution" value="2.80 A"/>
    <property type="chains" value="AS17=2-133"/>
</dbReference>
<dbReference type="PDB" id="9BDN">
    <property type="method" value="EM"/>
    <property type="resolution" value="3.10 A"/>
    <property type="chains" value="AS17=2-133"/>
</dbReference>
<dbReference type="PDB" id="9BDP">
    <property type="method" value="EM"/>
    <property type="resolution" value="3.70 A"/>
    <property type="chains" value="AS17=2-133"/>
</dbReference>
<dbReference type="PDB" id="9C8K">
    <property type="method" value="EM"/>
    <property type="resolution" value="3.10 A"/>
    <property type="chains" value="R=1-135"/>
</dbReference>
<dbReference type="PDB" id="9F1B">
    <property type="method" value="EM"/>
    <property type="resolution" value="3.01 A"/>
    <property type="chains" value="Aq=1-135"/>
</dbReference>
<dbReference type="PDB" id="9F1C">
    <property type="method" value="EM"/>
    <property type="resolution" value="3.78 A"/>
    <property type="chains" value="Aq=1-135"/>
</dbReference>
<dbReference type="PDB" id="9F1D">
    <property type="method" value="EM"/>
    <property type="resolution" value="3.26 A"/>
    <property type="chains" value="Aq=1-135"/>
</dbReference>
<dbReference type="PDBsum" id="3JAG"/>
<dbReference type="PDBsum" id="3JAH"/>
<dbReference type="PDBsum" id="3JAI"/>
<dbReference type="PDBsum" id="4D5L"/>
<dbReference type="PDBsum" id="4D61"/>
<dbReference type="PDBsum" id="4KZX"/>
<dbReference type="PDBsum" id="4KZY"/>
<dbReference type="PDBsum" id="4KZZ"/>
<dbReference type="PDBsum" id="5K0Y"/>
<dbReference type="PDBsum" id="5LZS"/>
<dbReference type="PDBsum" id="5LZT"/>
<dbReference type="PDBsum" id="5LZU"/>
<dbReference type="PDBsum" id="5LZV"/>
<dbReference type="PDBsum" id="5LZW"/>
<dbReference type="PDBsum" id="5LZX"/>
<dbReference type="PDBsum" id="5LZY"/>
<dbReference type="PDBsum" id="5LZZ"/>
<dbReference type="PDBsum" id="6D90"/>
<dbReference type="PDBsum" id="6D9J"/>
<dbReference type="PDBsum" id="6GZ3"/>
<dbReference type="PDBsum" id="6HCF"/>
<dbReference type="PDBsum" id="6HCJ"/>
<dbReference type="PDBsum" id="6HCM"/>
<dbReference type="PDBsum" id="6HCQ"/>
<dbReference type="PDBsum" id="6MTB"/>
<dbReference type="PDBsum" id="6MTC"/>
<dbReference type="PDBsum" id="6MTD"/>
<dbReference type="PDBsum" id="6MTE"/>
<dbReference type="PDBsum" id="6P4G"/>
<dbReference type="PDBsum" id="6P4H"/>
<dbReference type="PDBsum" id="6P5I"/>
<dbReference type="PDBsum" id="6P5J"/>
<dbReference type="PDBsum" id="6P5K"/>
<dbReference type="PDBsum" id="6P5N"/>
<dbReference type="PDBsum" id="6R5Q"/>
<dbReference type="PDBsum" id="6R6G"/>
<dbReference type="PDBsum" id="6R6P"/>
<dbReference type="PDBsum" id="6R7Q"/>
<dbReference type="PDBsum" id="6SGC"/>
<dbReference type="PDBsum" id="6W2S"/>
<dbReference type="PDBsum" id="6W2T"/>
<dbReference type="PDBsum" id="6YAL"/>
<dbReference type="PDBsum" id="6YAM"/>
<dbReference type="PDBsum" id="6YAN"/>
<dbReference type="PDBsum" id="6ZVK"/>
<dbReference type="PDBsum" id="7A01"/>
<dbReference type="PDBsum" id="7JQB"/>
<dbReference type="PDBsum" id="7JQC"/>
<dbReference type="PDBsum" id="7MDZ"/>
<dbReference type="PDBsum" id="7NWI"/>
<dbReference type="PDBsum" id="7O7Y"/>
<dbReference type="PDBsum" id="7O7Z"/>
<dbReference type="PDBsum" id="7O80"/>
<dbReference type="PDBsum" id="7O81"/>
<dbReference type="PDBsum" id="7OYD"/>
<dbReference type="PDBsum" id="7SYG"/>
<dbReference type="PDBsum" id="7SYH"/>
<dbReference type="PDBsum" id="7SYI"/>
<dbReference type="PDBsum" id="7SYJ"/>
<dbReference type="PDBsum" id="7SYK"/>
<dbReference type="PDBsum" id="7SYL"/>
<dbReference type="PDBsum" id="7SYM"/>
<dbReference type="PDBsum" id="7SYN"/>
<dbReference type="PDBsum" id="7SYO"/>
<dbReference type="PDBsum" id="7SYP"/>
<dbReference type="PDBsum" id="7SYQ"/>
<dbReference type="PDBsum" id="7SYR"/>
<dbReference type="PDBsum" id="7SYS"/>
<dbReference type="PDBsum" id="7SYT"/>
<dbReference type="PDBsum" id="7SYU"/>
<dbReference type="PDBsum" id="7SYV"/>
<dbReference type="PDBsum" id="7SYW"/>
<dbReference type="PDBsum" id="7SYX"/>
<dbReference type="PDBsum" id="7TOQ"/>
<dbReference type="PDBsum" id="7TOR"/>
<dbReference type="PDBsum" id="7UCJ"/>
<dbReference type="PDBsum" id="7UCK"/>
<dbReference type="PDBsum" id="7ZJW"/>
<dbReference type="PDBsum" id="7ZJX"/>
<dbReference type="PDBsum" id="8BHF"/>
<dbReference type="PDBsum" id="8BTK"/>
<dbReference type="PDBsum" id="8P03"/>
<dbReference type="PDBsum" id="8P09"/>
<dbReference type="PDBsum" id="8P2K"/>
<dbReference type="PDBsum" id="8SCB"/>
<dbReference type="PDBsum" id="8VFT"/>
<dbReference type="PDBsum" id="9BDL"/>
<dbReference type="PDBsum" id="9BDN"/>
<dbReference type="PDBsum" id="9BDP"/>
<dbReference type="PDBsum" id="9C8K"/>
<dbReference type="PDBsum" id="9F1B"/>
<dbReference type="PDBsum" id="9F1C"/>
<dbReference type="PDBsum" id="9F1D"/>
<dbReference type="EMDB" id="EMD-0098"/>
<dbReference type="EMDB" id="EMD-0099"/>
<dbReference type="EMDB" id="EMD-0100"/>
<dbReference type="EMDB" id="EMD-0192"/>
<dbReference type="EMDB" id="EMD-0194"/>
<dbReference type="EMDB" id="EMD-0195"/>
<dbReference type="EMDB" id="EMD-0197"/>
<dbReference type="EMDB" id="EMD-10181"/>
<dbReference type="EMDB" id="EMD-10760"/>
<dbReference type="EMDB" id="EMD-10761"/>
<dbReference type="EMDB" id="EMD-10762"/>
<dbReference type="EMDB" id="EMD-11459"/>
<dbReference type="EMDB" id="EMD-11590"/>
<dbReference type="EMDB" id="EMD-12633"/>
<dbReference type="EMDB" id="EMD-12756"/>
<dbReference type="EMDB" id="EMD-12757"/>
<dbReference type="EMDB" id="EMD-12758"/>
<dbReference type="EMDB" id="EMD-12759"/>
<dbReference type="EMDB" id="EMD-13114"/>
<dbReference type="EMDB" id="EMD-14751"/>
<dbReference type="EMDB" id="EMD-14752"/>
<dbReference type="EMDB" id="EMD-16052"/>
<dbReference type="EMDB" id="EMD-16232"/>
<dbReference type="EMDB" id="EMD-17329"/>
<dbReference type="EMDB" id="EMD-17330"/>
<dbReference type="EMDB" id="EMD-17367"/>
<dbReference type="EMDB" id="EMD-20248"/>
<dbReference type="EMDB" id="EMD-20249"/>
<dbReference type="EMDB" id="EMD-20255"/>
<dbReference type="EMDB" id="EMD-20256"/>
<dbReference type="EMDB" id="EMD-20257"/>
<dbReference type="EMDB" id="EMD-20258"/>
<dbReference type="EMDB" id="EMD-21529"/>
<dbReference type="EMDB" id="EMD-21530"/>
<dbReference type="EMDB" id="EMD-22432"/>
<dbReference type="EMDB" id="EMD-22433"/>
<dbReference type="EMDB" id="EMD-23785"/>
<dbReference type="EMDB" id="EMD-25527"/>
<dbReference type="EMDB" id="EMD-25528"/>
<dbReference type="EMDB" id="EMD-25529"/>
<dbReference type="EMDB" id="EMD-25530"/>
<dbReference type="EMDB" id="EMD-25531"/>
<dbReference type="EMDB" id="EMD-25532"/>
<dbReference type="EMDB" id="EMD-25533"/>
<dbReference type="EMDB" id="EMD-25534"/>
<dbReference type="EMDB" id="EMD-25535"/>
<dbReference type="EMDB" id="EMD-25536"/>
<dbReference type="EMDB" id="EMD-25537"/>
<dbReference type="EMDB" id="EMD-25538"/>
<dbReference type="EMDB" id="EMD-25539"/>
<dbReference type="EMDB" id="EMD-25540"/>
<dbReference type="EMDB" id="EMD-25541"/>
<dbReference type="EMDB" id="EMD-25542"/>
<dbReference type="EMDB" id="EMD-25543"/>
<dbReference type="EMDB" id="EMD-25544"/>
<dbReference type="EMDB" id="EMD-26035"/>
<dbReference type="EMDB" id="EMD-26036"/>
<dbReference type="EMDB" id="EMD-26444"/>
<dbReference type="EMDB" id="EMD-26445"/>
<dbReference type="EMDB" id="EMD-40344"/>
<dbReference type="EMDB" id="EMD-4130"/>
<dbReference type="EMDB" id="EMD-4131"/>
<dbReference type="EMDB" id="EMD-4132"/>
<dbReference type="EMDB" id="EMD-4133"/>
<dbReference type="EMDB" id="EMD-4134"/>
<dbReference type="EMDB" id="EMD-4135"/>
<dbReference type="EMDB" id="EMD-4136"/>
<dbReference type="EMDB" id="EMD-4137"/>
<dbReference type="EMDB" id="EMD-43189"/>
<dbReference type="EMDB" id="EMD-44461"/>
<dbReference type="EMDB" id="EMD-44463"/>
<dbReference type="EMDB" id="EMD-44464"/>
<dbReference type="EMDB" id="EMD-45307"/>
<dbReference type="EMDB" id="EMD-4729"/>
<dbReference type="EMDB" id="EMD-4735"/>
<dbReference type="EMDB" id="EMD-4737"/>
<dbReference type="EMDB" id="EMD-4745"/>
<dbReference type="EMDB" id="EMD-50124"/>
<dbReference type="EMDB" id="EMD-50125"/>
<dbReference type="EMDB" id="EMD-50126"/>
<dbReference type="EMDB" id="EMD-7834"/>
<dbReference type="EMDB" id="EMD-7836"/>
<dbReference type="EMDB" id="EMD-8190"/>
<dbReference type="EMDB" id="EMD-9237"/>
<dbReference type="EMDB" id="EMD-9239"/>
<dbReference type="EMDB" id="EMD-9240"/>
<dbReference type="EMDB" id="EMD-9242"/>
<dbReference type="SMR" id="G1TU13"/>
<dbReference type="IntAct" id="G1TU13">
    <property type="interactions" value="1"/>
</dbReference>
<dbReference type="STRING" id="9986.ENSOCUP00000020536"/>
<dbReference type="PaxDb" id="9986-ENSOCUP00000020536"/>
<dbReference type="Ensembl" id="ENSOCUT00000005303.2">
    <property type="protein sequence ID" value="ENSOCUP00000020536.1"/>
    <property type="gene ID" value="ENSOCUG00000005304.2"/>
</dbReference>
<dbReference type="Ensembl" id="ENSOCUT00000006369.3">
    <property type="protein sequence ID" value="ENSOCUP00000019833.2"/>
    <property type="gene ID" value="ENSOCUG00000006370.3"/>
</dbReference>
<dbReference type="GeneID" id="100359176"/>
<dbReference type="KEGG" id="ocu:100353606"/>
<dbReference type="KEGG" id="ocu:100359176"/>
<dbReference type="CTD" id="6218"/>
<dbReference type="eggNOG" id="KOG0187">
    <property type="taxonomic scope" value="Eukaryota"/>
</dbReference>
<dbReference type="GeneTree" id="ENSGT00390000006548"/>
<dbReference type="HOGENOM" id="CLU_112958_1_1_1"/>
<dbReference type="OMA" id="HTEHIEV"/>
<dbReference type="OrthoDB" id="1727351at2759"/>
<dbReference type="TreeFam" id="TF317992"/>
<dbReference type="EvolutionaryTrace" id="G1TU13"/>
<dbReference type="Proteomes" id="UP000001811">
    <property type="component" value="Chromosome 10"/>
</dbReference>
<dbReference type="Bgee" id="ENSOCUG00000005304">
    <property type="expression patterns" value="Expressed in uterus and 15 other cell types or tissues"/>
</dbReference>
<dbReference type="GO" id="GO:0022626">
    <property type="term" value="C:cytosolic ribosome"/>
    <property type="evidence" value="ECO:0000314"/>
    <property type="project" value="UniProtKB"/>
</dbReference>
<dbReference type="GO" id="GO:0005730">
    <property type="term" value="C:nucleolus"/>
    <property type="evidence" value="ECO:0007669"/>
    <property type="project" value="UniProtKB-SubCell"/>
</dbReference>
<dbReference type="GO" id="GO:1990904">
    <property type="term" value="C:ribonucleoprotein complex"/>
    <property type="evidence" value="ECO:0007669"/>
    <property type="project" value="UniProtKB-KW"/>
</dbReference>
<dbReference type="GO" id="GO:0003735">
    <property type="term" value="F:structural constituent of ribosome"/>
    <property type="evidence" value="ECO:0000314"/>
    <property type="project" value="UniProtKB"/>
</dbReference>
<dbReference type="GO" id="GO:0006412">
    <property type="term" value="P:translation"/>
    <property type="evidence" value="ECO:0007669"/>
    <property type="project" value="InterPro"/>
</dbReference>
<dbReference type="FunFam" id="1.10.60.20:FF:000001">
    <property type="entry name" value="40S ribosomal protein S17"/>
    <property type="match status" value="1"/>
</dbReference>
<dbReference type="Gene3D" id="1.10.60.20">
    <property type="entry name" value="Ribosomal protein S17e-like"/>
    <property type="match status" value="1"/>
</dbReference>
<dbReference type="HAMAP" id="MF_00511">
    <property type="entry name" value="Ribosomal_eS17"/>
    <property type="match status" value="1"/>
</dbReference>
<dbReference type="InterPro" id="IPR001210">
    <property type="entry name" value="Ribosomal_eS17"/>
</dbReference>
<dbReference type="InterPro" id="IPR018273">
    <property type="entry name" value="Ribosomal_eS17_CS"/>
</dbReference>
<dbReference type="InterPro" id="IPR036401">
    <property type="entry name" value="Ribosomal_eS17_sf"/>
</dbReference>
<dbReference type="NCBIfam" id="NF002242">
    <property type="entry name" value="PRK01151.1"/>
    <property type="match status" value="1"/>
</dbReference>
<dbReference type="PANTHER" id="PTHR10732">
    <property type="entry name" value="40S RIBOSOMAL PROTEIN S17"/>
    <property type="match status" value="1"/>
</dbReference>
<dbReference type="PANTHER" id="PTHR10732:SF0">
    <property type="entry name" value="40S RIBOSOMAL PROTEIN S17"/>
    <property type="match status" value="1"/>
</dbReference>
<dbReference type="Pfam" id="PF00833">
    <property type="entry name" value="Ribosomal_S17e"/>
    <property type="match status" value="1"/>
</dbReference>
<dbReference type="SUPFAM" id="SSF116820">
    <property type="entry name" value="Rps17e-like"/>
    <property type="match status" value="1"/>
</dbReference>
<dbReference type="PROSITE" id="PS00712">
    <property type="entry name" value="RIBOSOMAL_S17E"/>
    <property type="match status" value="1"/>
</dbReference>
<accession>G1TU13</accession>
<accession>G1TS23</accession>
<keyword id="KW-0002">3D-structure</keyword>
<keyword id="KW-0963">Cytoplasm</keyword>
<keyword id="KW-1017">Isopeptide bond</keyword>
<keyword id="KW-0539">Nucleus</keyword>
<keyword id="KW-0597">Phosphoprotein</keyword>
<keyword id="KW-1185">Reference proteome</keyword>
<keyword id="KW-0687">Ribonucleoprotein</keyword>
<keyword id="KW-0689">Ribosomal protein</keyword>
<keyword id="KW-0832">Ubl conjugation</keyword>
<sequence length="135" mass="15524">MGRVRTKTVKKAARVIIEKYYTRLGNDFHTNKRVCEEIAIIPSKKLRNKIAGYVTHLMKRIQRGPVRGISIKLQEEERERRDNYVPEVSALDQEIIEVDPDTKEMLKLLDFGSLSNLQVTQPTVGMNFKTPRGAV</sequence>
<feature type="initiator methionine" description="Removed" evidence="1">
    <location>
        <position position="1"/>
    </location>
</feature>
<feature type="chain" id="PRO_0000460068" description="Small ribosomal subunit protein eS17">
    <location>
        <begin position="2"/>
        <end position="135"/>
    </location>
</feature>
<feature type="modified residue" description="N6-succinyllysine" evidence="2">
    <location>
        <position position="19"/>
    </location>
</feature>
<feature type="modified residue" description="Phosphoserine" evidence="1">
    <location>
        <position position="113"/>
    </location>
</feature>
<feature type="modified residue" description="Phosphothreonine" evidence="1">
    <location>
        <position position="130"/>
    </location>
</feature>
<feature type="cross-link" description="Glycyl lysine isopeptide (Lys-Gly) (interchain with G-Cter in SUMO1); alternate" evidence="1">
    <location>
        <position position="103"/>
    </location>
</feature>
<feature type="cross-link" description="Glycyl lysine isopeptide (Lys-Gly) (interchain with G-Cter in SUMO2); alternate" evidence="1">
    <location>
        <position position="103"/>
    </location>
</feature>
<feature type="helix" evidence="50">
    <location>
        <begin position="7"/>
        <end position="16"/>
    </location>
</feature>
<feature type="turn" evidence="50">
    <location>
        <begin position="17"/>
        <end position="19"/>
    </location>
</feature>
<feature type="helix" evidence="50">
    <location>
        <begin position="21"/>
        <end position="23"/>
    </location>
</feature>
<feature type="strand" evidence="50">
    <location>
        <begin position="26"/>
        <end position="29"/>
    </location>
</feature>
<feature type="helix" evidence="50">
    <location>
        <begin position="30"/>
        <end position="35"/>
    </location>
</feature>
<feature type="strand" evidence="50">
    <location>
        <begin position="38"/>
        <end position="40"/>
    </location>
</feature>
<feature type="strand" evidence="51">
    <location>
        <begin position="42"/>
        <end position="44"/>
    </location>
</feature>
<feature type="helix" evidence="50">
    <location>
        <begin position="46"/>
        <end position="61"/>
    </location>
</feature>
<feature type="turn" evidence="50">
    <location>
        <begin position="72"/>
        <end position="78"/>
    </location>
</feature>
<feature type="helix" evidence="50">
    <location>
        <begin position="79"/>
        <end position="82"/>
    </location>
</feature>
<feature type="turn" evidence="51">
    <location>
        <begin position="86"/>
        <end position="88"/>
    </location>
</feature>
<feature type="strand" evidence="49">
    <location>
        <begin position="89"/>
        <end position="94"/>
    </location>
</feature>
<feature type="strand" evidence="50">
    <location>
        <begin position="96"/>
        <end position="98"/>
    </location>
</feature>
<feature type="helix" evidence="50">
    <location>
        <begin position="100"/>
        <end position="108"/>
    </location>
</feature>
<feature type="strand" evidence="50">
    <location>
        <begin position="117"/>
        <end position="119"/>
    </location>
</feature>
<feature type="strand" evidence="52">
    <location>
        <begin position="122"/>
        <end position="124"/>
    </location>
</feature>
<protein>
    <recommendedName>
        <fullName>Small ribosomal subunit protein eS17</fullName>
    </recommendedName>
    <alternativeName>
        <fullName>40S ribosomal protein S17</fullName>
    </alternativeName>
</protein>
<reference key="1">
    <citation type="journal article" date="2011" name="Nature">
        <title>A high-resolution map of human evolutionary constraint using 29 mammals.</title>
        <authorList>
            <person name="Lindblad-Toh K."/>
            <person name="Garber M."/>
            <person name="Zuk O."/>
            <person name="Lin M.F."/>
            <person name="Parker B.J."/>
            <person name="Washietl S."/>
            <person name="Kheradpour P."/>
            <person name="Ernst J."/>
            <person name="Jordan G."/>
            <person name="Mauceli E."/>
            <person name="Ward L.D."/>
            <person name="Lowe C.B."/>
            <person name="Holloway A.K."/>
            <person name="Clamp M."/>
            <person name="Gnerre S."/>
            <person name="Alfoldi J."/>
            <person name="Beal K."/>
            <person name="Chang J."/>
            <person name="Clawson H."/>
            <person name="Cuff J."/>
            <person name="Di Palma F."/>
            <person name="Fitzgerald S."/>
            <person name="Flicek P."/>
            <person name="Guttman M."/>
            <person name="Hubisz M.J."/>
            <person name="Jaffe D.B."/>
            <person name="Jungreis I."/>
            <person name="Kent W.J."/>
            <person name="Kostka D."/>
            <person name="Lara M."/>
            <person name="Martins A.L."/>
            <person name="Massingham T."/>
            <person name="Moltke I."/>
            <person name="Raney B.J."/>
            <person name="Rasmussen M.D."/>
            <person name="Robinson J."/>
            <person name="Stark A."/>
            <person name="Vilella A.J."/>
            <person name="Wen J."/>
            <person name="Xie X."/>
            <person name="Zody M.C."/>
            <person name="Baldwin J."/>
            <person name="Bloom T."/>
            <person name="Chin C.W."/>
            <person name="Heiman D."/>
            <person name="Nicol R."/>
            <person name="Nusbaum C."/>
            <person name="Young S."/>
            <person name="Wilkinson J."/>
            <person name="Worley K.C."/>
            <person name="Kovar C.L."/>
            <person name="Muzny D.M."/>
            <person name="Gibbs R.A."/>
            <person name="Cree A."/>
            <person name="Dihn H.H."/>
            <person name="Fowler G."/>
            <person name="Jhangiani S."/>
            <person name="Joshi V."/>
            <person name="Lee S."/>
            <person name="Lewis L.R."/>
            <person name="Nazareth L.V."/>
            <person name="Okwuonu G."/>
            <person name="Santibanez J."/>
            <person name="Warren W.C."/>
            <person name="Mardis E.R."/>
            <person name="Weinstock G.M."/>
            <person name="Wilson R.K."/>
            <person name="Delehaunty K."/>
            <person name="Dooling D."/>
            <person name="Fronik C."/>
            <person name="Fulton L."/>
            <person name="Fulton B."/>
            <person name="Graves T."/>
            <person name="Minx P."/>
            <person name="Sodergren E."/>
            <person name="Birney E."/>
            <person name="Margulies E.H."/>
            <person name="Herrero J."/>
            <person name="Green E.D."/>
            <person name="Haussler D."/>
            <person name="Siepel A."/>
            <person name="Goldman N."/>
            <person name="Pollard K.S."/>
            <person name="Pedersen J.S."/>
            <person name="Lander E.S."/>
            <person name="Kellis M."/>
        </authorList>
    </citation>
    <scope>NUCLEOTIDE SEQUENCE [LARGE SCALE GENOMIC DNA]</scope>
    <source>
        <strain>Thorbecke</strain>
    </source>
</reference>
<reference evidence="24 25" key="2">
    <citation type="journal article" date="2013" name="Nature">
        <title>The initiation of mammalian protein synthesis and mRNA scanning mechanism.</title>
        <authorList>
            <person name="Lomakin I.B."/>
            <person name="Steitz T.A."/>
        </authorList>
    </citation>
    <scope>X-RAY CRYSTALLOGRAPHY (7.01 ANGSTROMS) OF 40S RIBOSOME</scope>
    <scope>FUNCTION</scope>
    <scope>SUBUNIT</scope>
    <scope>SUBCELLULAR LOCATION</scope>
</reference>
<reference evidence="23" key="3">
    <citation type="journal article" date="2015" name="Mol. Cell">
        <title>Cryo-EM of ribosomal 80S complexes with termination factors reveals the translocated cricket paralysis virus IRES.</title>
        <authorList>
            <person name="Muhs M."/>
            <person name="Hilal T."/>
            <person name="Mielke T."/>
            <person name="Skabkin M.A."/>
            <person name="Sanbonmatsu K.Y."/>
            <person name="Pestova T.V."/>
            <person name="Spahn C.M."/>
        </authorList>
    </citation>
    <scope>STRUCTURE BY ELECTRON MICROSCOPY (9.00 ANGSTROMS) OF RIBOSOME</scope>
    <scope>FUNCTION</scope>
    <scope>SUBUNIT</scope>
    <scope>SUBCELLULAR LOCATION</scope>
</reference>
<reference evidence="21 22" key="4">
    <citation type="journal article" date="2015" name="Nature">
        <title>Structural basis for stop codon recognition in eukaryotes.</title>
        <authorList>
            <person name="Brown A."/>
            <person name="Shao S."/>
            <person name="Murray J."/>
            <person name="Hegde R.S."/>
            <person name="Ramakrishnan V."/>
        </authorList>
    </citation>
    <scope>STRUCTURE BY ELECTRON MICROSCOPY (3.45 ANGSTROMS) OF RIBOSOME</scope>
    <scope>FUNCTION</scope>
    <scope>SUBUNIT</scope>
    <scope>SUBCELLULAR LOCATION</scope>
</reference>
<reference evidence="26" key="5">
    <citation type="journal article" date="2016" name="Cell">
        <title>Decoding mammalian ribosome-mRNA states by translational GTPase complexes.</title>
        <authorList>
            <person name="Shao S."/>
            <person name="Murray J."/>
            <person name="Brown A."/>
            <person name="Taunton J."/>
            <person name="Ramakrishnan V."/>
            <person name="Hegde R.S."/>
        </authorList>
    </citation>
    <scope>STRUCTURE BY ELECTRON MICROSCOPY (3.31 ANGSTROMS) OF RIBOSOME</scope>
    <scope>FUNCTION</scope>
    <scope>SUBCELLULAR LOCATION</scope>
    <scope>SUBUNIT</scope>
</reference>
<reference evidence="28" key="6">
    <citation type="journal article" date="2018" name="Cell Rep.">
        <title>tRNA translocation by the eukaryotic 80S ribosome and the impact of GTP hydrolysis.</title>
        <authorList>
            <person name="Flis J."/>
            <person name="Holm M."/>
            <person name="Rundlet E.J."/>
            <person name="Loerke J."/>
            <person name="Hilal T."/>
            <person name="Dabrowski M."/>
            <person name="Burger J."/>
            <person name="Mielke T."/>
            <person name="Blanchard S.C."/>
            <person name="Spahn C.M.T."/>
            <person name="Budkevich T.V."/>
        </authorList>
    </citation>
    <scope>STRUCTURE BY ELECTRON MICROSCOPY (3.60 ANGSTROMS) OF RIBOSOME</scope>
    <scope>FUNCTION</scope>
    <scope>SUBCELLULAR LOCATION</scope>
    <scope>SUBUNIT</scope>
</reference>
<reference evidence="27" key="7">
    <citation type="journal article" date="2018" name="Elife">
        <title>Dual tRNA mimicry in the Cricket paralysis virus IRES uncovers an unexpected similarity with the Hepatitis C Virus IRES.</title>
        <authorList>
            <person name="Pisareva V.P."/>
            <person name="Pisarev A.V."/>
            <person name="Fernandez I.S."/>
        </authorList>
    </citation>
    <scope>STRUCTURE BY ELECTRON MICROSCOPY (3.20 ANGSTROMS) OF RIBOSOME</scope>
    <scope>SUBUNIT</scope>
    <scope>SUBCELLULAR LOCATION</scope>
</reference>
<reference evidence="31 32" key="8">
    <citation type="journal article" date="2018" name="Elife">
        <title>Structures of translationally inactive mammalian ribosomes.</title>
        <authorList>
            <person name="Brown A."/>
            <person name="Baird M.R."/>
            <person name="Yip M.C."/>
            <person name="Murray J."/>
            <person name="Shao S."/>
        </authorList>
    </citation>
    <scope>STRUCTURE BY ELECTRON MICROSCOPY (3.30 ANGSTROMS) OF RIBOSOME</scope>
    <scope>SUBCELLULAR LOCATION</scope>
    <scope>SUBUNIT</scope>
</reference>
<reference evidence="29 30" key="9">
    <citation type="journal article" date="2018" name="Mol. Cell">
        <title>ZNF598 is a quality control sensor of collided ribosomes.</title>
        <authorList>
            <person name="Juszkiewicz S."/>
            <person name="Chandrasekaran V."/>
            <person name="Lin Z."/>
            <person name="Kraatz S."/>
            <person name="Ramakrishnan V."/>
            <person name="Hegde R.S."/>
        </authorList>
    </citation>
    <scope>STRUCTURE BY ELECTRON MICROSCOPY (3.80 ANGSTROMS) OF RIBOSOME</scope>
    <scope>SUBCELLULAR LOCATION</scope>
    <scope>SUBUNIT</scope>
</reference>
<reference evidence="35 36" key="10">
    <citation type="journal article" date="2019" name="Elife">
        <title>Structural and mutational analysis of the ribosome-arresting human XBP1u.</title>
        <authorList>
            <person name="Shanmuganathan V."/>
            <person name="Schiller N."/>
            <person name="Magoulopoulou A."/>
            <person name="Cheng J."/>
            <person name="Braunger K."/>
            <person name="Cymer F."/>
            <person name="Berninghausen O."/>
            <person name="Beatrix B."/>
            <person name="Kohno K."/>
            <person name="von Heijne G."/>
            <person name="Beckmann R."/>
        </authorList>
    </citation>
    <scope>STRUCTURE BY ELECTRON MICROSCOPY (3.00 ANGSTROMS) OF RIBOSOME</scope>
    <scope>SUBCELLULAR LOCATION</scope>
    <scope>SUBUNIT</scope>
</reference>
<reference evidence="33 34" key="11">
    <citation type="journal article" date="2019" name="EMBO J.">
        <title>The Israeli acute paralysis virus IRES captures host ribosomes by mimicking a ribosomal state with hybrid tRNAs.</title>
        <authorList>
            <person name="Acosta-Reyes F."/>
            <person name="Neupane R."/>
            <person name="Frank J."/>
            <person name="Fernandez I.S."/>
        </authorList>
    </citation>
    <scope>STRUCTURE BY ELECTRON MICROSCOPY (3.10 ANGSTROMS) OF RIBOSOME</scope>
    <scope>SUBUNIT</scope>
    <scope>SUBCELLULAR LOCATION</scope>
</reference>
<reference evidence="37" key="12">
    <citation type="journal article" date="2019" name="Nat. Struct. Mol. Biol.">
        <title>Mechanism of ribosome stalling during translation of a poly(A) tail.</title>
        <authorList>
            <person name="Chandrasekaran V."/>
            <person name="Juszkiewicz S."/>
            <person name="Choi J."/>
            <person name="Puglisi J.D."/>
            <person name="Brown A."/>
            <person name="Shao S."/>
            <person name="Ramakrishnan V."/>
            <person name="Hegde R.S."/>
        </authorList>
    </citation>
    <scope>STRUCTURE BY ELECTRON MICROSCOPY (2.80 ANGSTROMS) OF RIBOSOME</scope>
    <scope>SUBCELLULAR LOCATION</scope>
    <scope>SUBUNIT</scope>
</reference>
<reference evidence="40 41" key="13">
    <citation type="journal article" date="2020" name="Cell Rep.">
        <title>The Halastavi arva virus intergenic region IRES promotes translation by the simplest possible initiation mechanism.</title>
        <authorList>
            <person name="Abaeva I.S."/>
            <person name="Vicens Q."/>
            <person name="Bochler A."/>
            <person name="Soufari H."/>
            <person name="Simonetti A."/>
            <person name="Pestova T.V."/>
            <person name="Hashem Y."/>
            <person name="Hellen C.U.T."/>
        </authorList>
    </citation>
    <scope>STRUCTURE BY ELECTRON MICROSCOPY (3.49 ANGSTROMS) OF RIBOSOME</scope>
    <scope>SUBCELLULAR LOCATION</scope>
    <scope>SUBUNIT</scope>
</reference>
<reference evidence="38 39" key="14">
    <citation type="journal article" date="2020" name="Elife">
        <title>A complex IRES at the 5'-UTR of a viral mRNA assembles a functional 48S complex via an uAUG intermediate.</title>
        <authorList>
            <person name="Neupane R."/>
            <person name="Pisareva V.P."/>
            <person name="Rodriguez C.F."/>
            <person name="Pisarev A.V."/>
            <person name="Fernandez I.S."/>
        </authorList>
    </citation>
    <scope>STRUCTURE BY ELECTRON MICROSCOPY (3.00 ANGSTROMS) OF RIBOSOME</scope>
    <scope>SUBUNIT</scope>
    <scope>SUBCELLULAR LOCATION</scope>
</reference>
<reference evidence="43 44" key="15">
    <citation type="journal article" date="2022" name="EMBO J.">
        <title>Molecular architecture of 40S translation initiation complexes on the hepatitis C virus IRES.</title>
        <authorList>
            <person name="Brown Z.P."/>
            <person name="Abaeva I.S."/>
            <person name="De S."/>
            <person name="Hellen C.U.T."/>
            <person name="Pestova T.V."/>
            <person name="Frank J."/>
        </authorList>
    </citation>
    <scope>STRUCTURE BY ELECTRON MICROSCOPY (3.50 ANGSTROMS) OF RIBOSOME</scope>
    <scope>SUBCELLULAR LOCATION</scope>
    <scope>SUBUNIT</scope>
</reference>
<reference evidence="45 46" key="16">
    <citation type="journal article" date="2022" name="Mol. Cell">
        <title>Direct epitranscriptomic regulation of mammalian translation initiation through N4-acetylcytidine.</title>
        <authorList>
            <person name="Arango D."/>
            <person name="Sturgill D."/>
            <person name="Yang R."/>
            <person name="Kanai T."/>
            <person name="Bauer P."/>
            <person name="Roy J."/>
            <person name="Wang Z."/>
            <person name="Hosogane M."/>
            <person name="Schiffers S."/>
            <person name="Oberdoerffer S."/>
        </authorList>
    </citation>
    <scope>STRUCTURE BY ELECTRON MICROSCOPY (2.80 ANGSTROMS) OF RIBOSOME</scope>
    <scope>SUBCELLULAR LOCATION</scope>
    <scope>SUBUNIT</scope>
</reference>
<reference evidence="47 48" key="17">
    <citation type="journal article" date="2022" name="Science">
        <title>Structure of the mammalian ribosome as it decodes the selenocysteine UGA codon.</title>
        <authorList>
            <person name="Hilal T."/>
            <person name="Killam B.Y."/>
            <person name="Grozdanovic M."/>
            <person name="Dobosz-Bartoszek M."/>
            <person name="Loerke J."/>
            <person name="Buerger J."/>
            <person name="Mielke T."/>
            <person name="Copeland P.R."/>
            <person name="Simonovic M."/>
            <person name="Spahn C.M.T."/>
        </authorList>
    </citation>
    <scope>STRUCTURE BY ELECTRON MICROSCOPY (2.80 ANGSTROMS) OF RIBOSOME</scope>
    <scope>SUBCELLULAR LOCATION</scope>
    <scope>SUBUNIT</scope>
</reference>
<reference evidence="42" key="18">
    <citation type="journal article" date="2023" name="Nature">
        <title>A molecular network of conserved factors keeps ribosomes dormant in the egg.</title>
        <authorList>
            <person name="Leesch F."/>
            <person name="Lorenzo-Orts L."/>
            <person name="Pribitzer C."/>
            <person name="Grishkovskaya I."/>
            <person name="Roehsner J."/>
            <person name="Chugunova A."/>
            <person name="Matzinger M."/>
            <person name="Roitinger E."/>
            <person name="Belacic K."/>
            <person name="Kandolf S."/>
            <person name="Lin T.Y."/>
            <person name="Mechtler K."/>
            <person name="Meinhart A."/>
            <person name="Haselbach D."/>
            <person name="Pauli A."/>
        </authorList>
    </citation>
    <scope>STRUCTURE BY ELECTRON MICROSCOPY (2.30 ANGSTROMS) OF RIBOSOME</scope>
    <scope>SUBCELLULAR LOCATION</scope>
    <scope>SUBUNIT</scope>
</reference>
<name>RS17_RABIT</name>
<proteinExistence type="evidence at protein level"/>
<organism>
    <name type="scientific">Oryctolagus cuniculus</name>
    <name type="common">Rabbit</name>
    <dbReference type="NCBI Taxonomy" id="9986"/>
    <lineage>
        <taxon>Eukaryota</taxon>
        <taxon>Metazoa</taxon>
        <taxon>Chordata</taxon>
        <taxon>Craniata</taxon>
        <taxon>Vertebrata</taxon>
        <taxon>Euteleostomi</taxon>
        <taxon>Mammalia</taxon>
        <taxon>Eutheria</taxon>
        <taxon>Euarchontoglires</taxon>
        <taxon>Glires</taxon>
        <taxon>Lagomorpha</taxon>
        <taxon>Leporidae</taxon>
        <taxon>Oryctolagus</taxon>
    </lineage>
</organism>